<comment type="function">
    <text evidence="1 3">Member of the two-component regulatory system WalK/WalR that regulates genes involved in cell wall metabolism, virulence regulation, biofilm production, oxidative stress resistance and antibiotic resistance via direct or indirect regulation of autolysins (By similarity). Functions as a transcription regulator by direct binding to promoter regions (By similarity).</text>
</comment>
<comment type="subcellular location">
    <subcellularLocation>
        <location evidence="6">Cytoplasm</location>
    </subcellularLocation>
</comment>
<comment type="PTM">
    <text evidence="2 3">Phosphorylated by WalK on Asp-53 (By similarity). Phosphorylated by PknB on Thr-101 (By similarity).</text>
</comment>
<comment type="sequence caution" evidence="6">
    <conflict type="erroneous initiation">
        <sequence resource="EMBL-CDS" id="CAG39046"/>
    </conflict>
</comment>
<evidence type="ECO:0000250" key="1">
    <source>
        <dbReference type="UniProtKB" id="Q2G2U6"/>
    </source>
</evidence>
<evidence type="ECO:0000250" key="2">
    <source>
        <dbReference type="UniProtKB" id="Q7A8E1"/>
    </source>
</evidence>
<evidence type="ECO:0000250" key="3">
    <source>
        <dbReference type="UniProtKB" id="Q9RDT5"/>
    </source>
</evidence>
<evidence type="ECO:0000255" key="4">
    <source>
        <dbReference type="PROSITE-ProRule" id="PRU00169"/>
    </source>
</evidence>
<evidence type="ECO:0000255" key="5">
    <source>
        <dbReference type="PROSITE-ProRule" id="PRU01091"/>
    </source>
</evidence>
<evidence type="ECO:0000305" key="6"/>
<protein>
    <recommendedName>
        <fullName evidence="6">Transcriptional regulatory protein WalR</fullName>
    </recommendedName>
</protein>
<proteinExistence type="inferred from homology"/>
<dbReference type="EMBL" id="BX571856">
    <property type="protein sequence ID" value="CAG39046.1"/>
    <property type="status" value="ALT_INIT"/>
    <property type="molecule type" value="Genomic_DNA"/>
</dbReference>
<dbReference type="RefSeq" id="WP_000101976.1">
    <property type="nucleotide sequence ID" value="NC_002952.2"/>
</dbReference>
<dbReference type="SMR" id="Q6GKS7"/>
<dbReference type="GeneID" id="98344401"/>
<dbReference type="KEGG" id="sar:SAR0018"/>
<dbReference type="HOGENOM" id="CLU_000445_30_4_9"/>
<dbReference type="Proteomes" id="UP000000596">
    <property type="component" value="Chromosome"/>
</dbReference>
<dbReference type="GO" id="GO:0005829">
    <property type="term" value="C:cytosol"/>
    <property type="evidence" value="ECO:0007669"/>
    <property type="project" value="TreeGrafter"/>
</dbReference>
<dbReference type="GO" id="GO:0032993">
    <property type="term" value="C:protein-DNA complex"/>
    <property type="evidence" value="ECO:0007669"/>
    <property type="project" value="TreeGrafter"/>
</dbReference>
<dbReference type="GO" id="GO:0000156">
    <property type="term" value="F:phosphorelay response regulator activity"/>
    <property type="evidence" value="ECO:0007669"/>
    <property type="project" value="TreeGrafter"/>
</dbReference>
<dbReference type="GO" id="GO:0000976">
    <property type="term" value="F:transcription cis-regulatory region binding"/>
    <property type="evidence" value="ECO:0007669"/>
    <property type="project" value="TreeGrafter"/>
</dbReference>
<dbReference type="GO" id="GO:0006355">
    <property type="term" value="P:regulation of DNA-templated transcription"/>
    <property type="evidence" value="ECO:0007669"/>
    <property type="project" value="InterPro"/>
</dbReference>
<dbReference type="CDD" id="cd17614">
    <property type="entry name" value="REC_OmpR_YycF-like"/>
    <property type="match status" value="1"/>
</dbReference>
<dbReference type="CDD" id="cd00383">
    <property type="entry name" value="trans_reg_C"/>
    <property type="match status" value="1"/>
</dbReference>
<dbReference type="FunFam" id="1.10.10.10:FF:000089">
    <property type="entry name" value="Alkaline phosphatase synthesis response regulator"/>
    <property type="match status" value="1"/>
</dbReference>
<dbReference type="FunFam" id="3.40.50.2300:FF:000052">
    <property type="entry name" value="DNA-binding response regulator YycF"/>
    <property type="match status" value="1"/>
</dbReference>
<dbReference type="Gene3D" id="3.40.50.2300">
    <property type="match status" value="1"/>
</dbReference>
<dbReference type="Gene3D" id="6.10.250.690">
    <property type="match status" value="1"/>
</dbReference>
<dbReference type="Gene3D" id="1.10.10.10">
    <property type="entry name" value="Winged helix-like DNA-binding domain superfamily/Winged helix DNA-binding domain"/>
    <property type="match status" value="1"/>
</dbReference>
<dbReference type="InterPro" id="IPR011006">
    <property type="entry name" value="CheY-like_superfamily"/>
</dbReference>
<dbReference type="InterPro" id="IPR001867">
    <property type="entry name" value="OmpR/PhoB-type_DNA-bd"/>
</dbReference>
<dbReference type="InterPro" id="IPR047791">
    <property type="entry name" value="Resp_reg_WalR"/>
</dbReference>
<dbReference type="InterPro" id="IPR016032">
    <property type="entry name" value="Sig_transdc_resp-reg_C-effctor"/>
</dbReference>
<dbReference type="InterPro" id="IPR001789">
    <property type="entry name" value="Sig_transdc_resp-reg_receiver"/>
</dbReference>
<dbReference type="InterPro" id="IPR039420">
    <property type="entry name" value="WalR-like"/>
</dbReference>
<dbReference type="InterPro" id="IPR036388">
    <property type="entry name" value="WH-like_DNA-bd_sf"/>
</dbReference>
<dbReference type="NCBIfam" id="NF040534">
    <property type="entry name" value="resp_reg_YycF"/>
    <property type="match status" value="1"/>
</dbReference>
<dbReference type="PANTHER" id="PTHR48111:SF40">
    <property type="entry name" value="PHOSPHATE REGULON TRANSCRIPTIONAL REGULATORY PROTEIN PHOB"/>
    <property type="match status" value="1"/>
</dbReference>
<dbReference type="PANTHER" id="PTHR48111">
    <property type="entry name" value="REGULATOR OF RPOS"/>
    <property type="match status" value="1"/>
</dbReference>
<dbReference type="Pfam" id="PF00072">
    <property type="entry name" value="Response_reg"/>
    <property type="match status" value="1"/>
</dbReference>
<dbReference type="Pfam" id="PF00486">
    <property type="entry name" value="Trans_reg_C"/>
    <property type="match status" value="1"/>
</dbReference>
<dbReference type="SMART" id="SM00448">
    <property type="entry name" value="REC"/>
    <property type="match status" value="1"/>
</dbReference>
<dbReference type="SMART" id="SM00862">
    <property type="entry name" value="Trans_reg_C"/>
    <property type="match status" value="1"/>
</dbReference>
<dbReference type="SUPFAM" id="SSF46894">
    <property type="entry name" value="C-terminal effector domain of the bipartite response regulators"/>
    <property type="match status" value="1"/>
</dbReference>
<dbReference type="SUPFAM" id="SSF52172">
    <property type="entry name" value="CheY-like"/>
    <property type="match status" value="1"/>
</dbReference>
<dbReference type="PROSITE" id="PS51755">
    <property type="entry name" value="OMPR_PHOB"/>
    <property type="match status" value="1"/>
</dbReference>
<dbReference type="PROSITE" id="PS50110">
    <property type="entry name" value="RESPONSE_REGULATORY"/>
    <property type="match status" value="1"/>
</dbReference>
<feature type="chain" id="PRO_0000353036" description="Transcriptional regulatory protein WalR">
    <location>
        <begin position="1"/>
        <end position="233"/>
    </location>
</feature>
<feature type="domain" description="Response regulatory" evidence="4">
    <location>
        <begin position="4"/>
        <end position="117"/>
    </location>
</feature>
<feature type="DNA-binding region" description="OmpR/PhoB-type" evidence="5">
    <location>
        <begin position="132"/>
        <end position="231"/>
    </location>
</feature>
<feature type="modified residue" description="4-aspartylphosphate" evidence="4">
    <location>
        <position position="53"/>
    </location>
</feature>
<feature type="modified residue" description="Phosphothreonine" evidence="2">
    <location>
        <position position="101"/>
    </location>
</feature>
<accession>Q6GKS7</accession>
<reference key="1">
    <citation type="journal article" date="2004" name="Proc. Natl. Acad. Sci. U.S.A.">
        <title>Complete genomes of two clinical Staphylococcus aureus strains: evidence for the rapid evolution of virulence and drug resistance.</title>
        <authorList>
            <person name="Holden M.T.G."/>
            <person name="Feil E.J."/>
            <person name="Lindsay J.A."/>
            <person name="Peacock S.J."/>
            <person name="Day N.P.J."/>
            <person name="Enright M.C."/>
            <person name="Foster T.J."/>
            <person name="Moore C.E."/>
            <person name="Hurst L."/>
            <person name="Atkin R."/>
            <person name="Barron A."/>
            <person name="Bason N."/>
            <person name="Bentley S.D."/>
            <person name="Chillingworth C."/>
            <person name="Chillingworth T."/>
            <person name="Churcher C."/>
            <person name="Clark L."/>
            <person name="Corton C."/>
            <person name="Cronin A."/>
            <person name="Doggett J."/>
            <person name="Dowd L."/>
            <person name="Feltwell T."/>
            <person name="Hance Z."/>
            <person name="Harris B."/>
            <person name="Hauser H."/>
            <person name="Holroyd S."/>
            <person name="Jagels K."/>
            <person name="James K.D."/>
            <person name="Lennard N."/>
            <person name="Line A."/>
            <person name="Mayes R."/>
            <person name="Moule S."/>
            <person name="Mungall K."/>
            <person name="Ormond D."/>
            <person name="Quail M.A."/>
            <person name="Rabbinowitsch E."/>
            <person name="Rutherford K.M."/>
            <person name="Sanders M."/>
            <person name="Sharp S."/>
            <person name="Simmonds M."/>
            <person name="Stevens K."/>
            <person name="Whitehead S."/>
            <person name="Barrell B.G."/>
            <person name="Spratt B.G."/>
            <person name="Parkhill J."/>
        </authorList>
    </citation>
    <scope>NUCLEOTIDE SEQUENCE [LARGE SCALE GENOMIC DNA]</scope>
    <source>
        <strain>MRSA252</strain>
    </source>
</reference>
<organism>
    <name type="scientific">Staphylococcus aureus (strain MRSA252)</name>
    <dbReference type="NCBI Taxonomy" id="282458"/>
    <lineage>
        <taxon>Bacteria</taxon>
        <taxon>Bacillati</taxon>
        <taxon>Bacillota</taxon>
        <taxon>Bacilli</taxon>
        <taxon>Bacillales</taxon>
        <taxon>Staphylococcaceae</taxon>
        <taxon>Staphylococcus</taxon>
    </lineage>
</organism>
<keyword id="KW-0010">Activator</keyword>
<keyword id="KW-0963">Cytoplasm</keyword>
<keyword id="KW-0238">DNA-binding</keyword>
<keyword id="KW-0597">Phosphoprotein</keyword>
<keyword id="KW-0804">Transcription</keyword>
<keyword id="KW-0805">Transcription regulation</keyword>
<keyword id="KW-0902">Two-component regulatory system</keyword>
<name>WALR_STAAR</name>
<sequence>MARKVVVVDDEKPIADILEFNLKKEGYDVYCAYDGNDAVDLIYEEEPDIVLLDIMLPGRDGMEVCREVRKKYEMPIIMLTAKDSEIDKVLGLELGADDYVTKPFSTRELIARVKANLRRHYSQPAQDTGNVTNEITIKDIVIYPDAYSIKKRGEDIELTHREFELFHYLSKHMGQVMTREHLLQTVWGYDYFGDVRTVDVTIRRLREKIEDDPSHPEYIVTRRGVGYFLQQHE</sequence>
<gene>
    <name type="primary">walR</name>
    <name type="synonym">yycF</name>
    <name type="ordered locus">SAR0018</name>
</gene>